<feature type="chain" id="PRO_0000188624" description="Glycogen synthase">
    <location>
        <begin position="1"/>
        <end position="476"/>
    </location>
</feature>
<feature type="binding site" evidence="1">
    <location>
        <position position="15"/>
    </location>
    <ligand>
        <name>ADP-alpha-D-glucose</name>
        <dbReference type="ChEBI" id="CHEBI:57498"/>
    </ligand>
</feature>
<reference key="1">
    <citation type="journal article" date="2004" name="Genome Res.">
        <title>The complete genome and proteome of Mycoplasma mobile.</title>
        <authorList>
            <person name="Jaffe J.D."/>
            <person name="Stange-Thomann N."/>
            <person name="Smith C."/>
            <person name="DeCaprio D."/>
            <person name="Fisher S."/>
            <person name="Butler J."/>
            <person name="Calvo S."/>
            <person name="Elkins T."/>
            <person name="FitzGerald M.G."/>
            <person name="Hafez N."/>
            <person name="Kodira C.D."/>
            <person name="Major J."/>
            <person name="Wang S."/>
            <person name="Wilkinson J."/>
            <person name="Nicol R."/>
            <person name="Nusbaum C."/>
            <person name="Birren B."/>
            <person name="Berg H.C."/>
            <person name="Church G.M."/>
        </authorList>
    </citation>
    <scope>NUCLEOTIDE SEQUENCE [LARGE SCALE GENOMIC DNA]</scope>
    <source>
        <strain>ATCC 43663 / NCTC 11711 / 163 K</strain>
    </source>
</reference>
<protein>
    <recommendedName>
        <fullName evidence="1">Glycogen synthase</fullName>
        <ecNumber evidence="1">2.4.1.21</ecNumber>
    </recommendedName>
    <alternativeName>
        <fullName evidence="1">Starch [bacterial glycogen] synthase</fullName>
    </alternativeName>
</protein>
<proteinExistence type="inferred from homology"/>
<dbReference type="EC" id="2.4.1.21" evidence="1"/>
<dbReference type="EMBL" id="AE017308">
    <property type="protein sequence ID" value="AAT27888.1"/>
    <property type="molecule type" value="Genomic_DNA"/>
</dbReference>
<dbReference type="RefSeq" id="WP_011264922.1">
    <property type="nucleotide sequence ID" value="NC_006908.1"/>
</dbReference>
<dbReference type="SMR" id="Q6KHP2"/>
<dbReference type="STRING" id="267748.MMOB4020"/>
<dbReference type="CAZy" id="GT5">
    <property type="family name" value="Glycosyltransferase Family 5"/>
</dbReference>
<dbReference type="KEGG" id="mmo:MMOB4020"/>
<dbReference type="eggNOG" id="COG0297">
    <property type="taxonomic scope" value="Bacteria"/>
</dbReference>
<dbReference type="HOGENOM" id="CLU_009583_18_2_14"/>
<dbReference type="UniPathway" id="UPA00164"/>
<dbReference type="Proteomes" id="UP000009072">
    <property type="component" value="Chromosome"/>
</dbReference>
<dbReference type="GO" id="GO:0009011">
    <property type="term" value="F:alpha-1,4-glucan glucosyltransferase (ADP-glucose donor) activity"/>
    <property type="evidence" value="ECO:0007669"/>
    <property type="project" value="UniProtKB-UniRule"/>
</dbReference>
<dbReference type="GO" id="GO:0004373">
    <property type="term" value="F:alpha-1,4-glucan glucosyltransferase (UDP-glucose donor) activity"/>
    <property type="evidence" value="ECO:0007669"/>
    <property type="project" value="InterPro"/>
</dbReference>
<dbReference type="GO" id="GO:0005978">
    <property type="term" value="P:glycogen biosynthetic process"/>
    <property type="evidence" value="ECO:0007669"/>
    <property type="project" value="UniProtKB-UniRule"/>
</dbReference>
<dbReference type="CDD" id="cd03791">
    <property type="entry name" value="GT5_Glycogen_synthase_DULL1-like"/>
    <property type="match status" value="1"/>
</dbReference>
<dbReference type="Gene3D" id="3.40.50.2000">
    <property type="entry name" value="Glycogen Phosphorylase B"/>
    <property type="match status" value="2"/>
</dbReference>
<dbReference type="HAMAP" id="MF_00484">
    <property type="entry name" value="Glycogen_synth"/>
    <property type="match status" value="1"/>
</dbReference>
<dbReference type="InterPro" id="IPR001296">
    <property type="entry name" value="Glyco_trans_1"/>
</dbReference>
<dbReference type="InterPro" id="IPR011835">
    <property type="entry name" value="GS/SS"/>
</dbReference>
<dbReference type="InterPro" id="IPR013534">
    <property type="entry name" value="Starch_synth_cat_dom"/>
</dbReference>
<dbReference type="NCBIfam" id="TIGR02095">
    <property type="entry name" value="glgA"/>
    <property type="match status" value="1"/>
</dbReference>
<dbReference type="PANTHER" id="PTHR45825:SF11">
    <property type="entry name" value="ALPHA AMYLASE DOMAIN-CONTAINING PROTEIN"/>
    <property type="match status" value="1"/>
</dbReference>
<dbReference type="PANTHER" id="PTHR45825">
    <property type="entry name" value="GRANULE-BOUND STARCH SYNTHASE 1, CHLOROPLASTIC/AMYLOPLASTIC"/>
    <property type="match status" value="1"/>
</dbReference>
<dbReference type="Pfam" id="PF08323">
    <property type="entry name" value="Glyco_transf_5"/>
    <property type="match status" value="1"/>
</dbReference>
<dbReference type="Pfam" id="PF00534">
    <property type="entry name" value="Glycos_transf_1"/>
    <property type="match status" value="1"/>
</dbReference>
<dbReference type="SUPFAM" id="SSF53756">
    <property type="entry name" value="UDP-Glycosyltransferase/glycogen phosphorylase"/>
    <property type="match status" value="1"/>
</dbReference>
<comment type="function">
    <text evidence="1">Synthesizes alpha-1,4-glucan chains using ADP-glucose.</text>
</comment>
<comment type="catalytic activity">
    <reaction evidence="1">
        <text>[(1-&gt;4)-alpha-D-glucosyl](n) + ADP-alpha-D-glucose = [(1-&gt;4)-alpha-D-glucosyl](n+1) + ADP + H(+)</text>
        <dbReference type="Rhea" id="RHEA:18189"/>
        <dbReference type="Rhea" id="RHEA-COMP:9584"/>
        <dbReference type="Rhea" id="RHEA-COMP:9587"/>
        <dbReference type="ChEBI" id="CHEBI:15378"/>
        <dbReference type="ChEBI" id="CHEBI:15444"/>
        <dbReference type="ChEBI" id="CHEBI:57498"/>
        <dbReference type="ChEBI" id="CHEBI:456216"/>
        <dbReference type="EC" id="2.4.1.21"/>
    </reaction>
</comment>
<comment type="pathway">
    <text evidence="1">Glycan biosynthesis; glycogen biosynthesis.</text>
</comment>
<comment type="similarity">
    <text evidence="1">Belongs to the glycosyltransferase 1 family. Bacterial/plant glycogen synthase subfamily.</text>
</comment>
<gene>
    <name evidence="1" type="primary">glgA</name>
    <name type="ordered locus">MMOB4020</name>
</gene>
<keyword id="KW-0320">Glycogen biosynthesis</keyword>
<keyword id="KW-0328">Glycosyltransferase</keyword>
<keyword id="KW-1185">Reference proteome</keyword>
<keyword id="KW-0808">Transferase</keyword>
<name>GLGA_MYCM1</name>
<sequence>MKILYISVECFPFIKTGGLGDVAYSFPKTLKKLGNDIKVFLIYSDSISEKYKEKMRSAYFFSLDLNGKSFPVEIFSLVMDDIEYLFFNDPSFKNIERTAYLDLHENSTFYLIFNKAISKFLELSAFKPEIIHANDWHTGILPLFLSGEKNENSKLKVVFTIHNLQYQGVFGASNVLKYLNEKERSNSLLSEIISNDIFNFMKAGIISSDIVTTVSETYKEEIKQPMQGMGLESVLNKYNSKLRGIINGLDYDIFNPSIDKYIEAKYDVSNYKEAKLINKIALQKELNLEQNKKIFLIGMISRLANQKGIDLVLNSLWNIVKDNDIQFVVLGTGDVNYESNLKSFGNKYPRNFKFINKFSDELSHKLYAGLDAFLIPSLFEPCGLTQLISLKYGCIPIARATGGLIDTITSYNDKQENANGFLFKEYTPEALYKSVKLAKNLFYNNKPEWNKLIYFGMDQRFGWEEIAKKYLESIYK</sequence>
<evidence type="ECO:0000255" key="1">
    <source>
        <dbReference type="HAMAP-Rule" id="MF_00484"/>
    </source>
</evidence>
<accession>Q6KHP2</accession>
<organism>
    <name type="scientific">Mycoplasma mobile (strain ATCC 43663 / 163K / NCTC 11711)</name>
    <name type="common">Mesomycoplasma mobile</name>
    <dbReference type="NCBI Taxonomy" id="267748"/>
    <lineage>
        <taxon>Bacteria</taxon>
        <taxon>Bacillati</taxon>
        <taxon>Mycoplasmatota</taxon>
        <taxon>Mycoplasmoidales</taxon>
        <taxon>Metamycoplasmataceae</taxon>
        <taxon>Mesomycoplasma</taxon>
    </lineage>
</organism>